<proteinExistence type="inferred from homology"/>
<gene>
    <name evidence="2" type="primary">infB</name>
    <name type="ordered locus">ACIAD0369</name>
</gene>
<protein>
    <recommendedName>
        <fullName evidence="2">Translation initiation factor IF-2</fullName>
    </recommendedName>
</protein>
<feature type="chain" id="PRO_0000228160" description="Translation initiation factor IF-2">
    <location>
        <begin position="1"/>
        <end position="899"/>
    </location>
</feature>
<feature type="domain" description="tr-type G">
    <location>
        <begin position="399"/>
        <end position="568"/>
    </location>
</feature>
<feature type="region of interest" description="Disordered" evidence="3">
    <location>
        <begin position="94"/>
        <end position="167"/>
    </location>
</feature>
<feature type="region of interest" description="Disordered" evidence="3">
    <location>
        <begin position="259"/>
        <end position="309"/>
    </location>
</feature>
<feature type="region of interest" description="G1" evidence="1">
    <location>
        <begin position="408"/>
        <end position="415"/>
    </location>
</feature>
<feature type="region of interest" description="G2" evidence="1">
    <location>
        <begin position="433"/>
        <end position="437"/>
    </location>
</feature>
<feature type="region of interest" description="G3" evidence="1">
    <location>
        <begin position="454"/>
        <end position="457"/>
    </location>
</feature>
<feature type="region of interest" description="G4" evidence="1">
    <location>
        <begin position="508"/>
        <end position="511"/>
    </location>
</feature>
<feature type="region of interest" description="G5" evidence="1">
    <location>
        <begin position="544"/>
        <end position="546"/>
    </location>
</feature>
<feature type="compositionally biased region" description="Basic and acidic residues" evidence="3">
    <location>
        <begin position="107"/>
        <end position="121"/>
    </location>
</feature>
<feature type="compositionally biased region" description="Low complexity" evidence="3">
    <location>
        <begin position="147"/>
        <end position="164"/>
    </location>
</feature>
<feature type="binding site" evidence="2">
    <location>
        <begin position="408"/>
        <end position="415"/>
    </location>
    <ligand>
        <name>GTP</name>
        <dbReference type="ChEBI" id="CHEBI:37565"/>
    </ligand>
</feature>
<feature type="binding site" evidence="2">
    <location>
        <begin position="454"/>
        <end position="458"/>
    </location>
    <ligand>
        <name>GTP</name>
        <dbReference type="ChEBI" id="CHEBI:37565"/>
    </ligand>
</feature>
<feature type="binding site" evidence="2">
    <location>
        <begin position="508"/>
        <end position="511"/>
    </location>
    <ligand>
        <name>GTP</name>
        <dbReference type="ChEBI" id="CHEBI:37565"/>
    </ligand>
</feature>
<sequence>MTDKSIKELALSVGRPVEKLLEQVREAGLPQRTANDIITTEQQDTLVNHLKKIHGQESGAGKITLKRKTTSTAKVASTSGKAKTINVEVRKKHTFTKPNPEQIAAEAKARQETEERTRPQEQPRQAPQQQMRDESENKAQATLNAMRAAQQKETAKTTSTTTEVVVKRKSTNKPIKPVNVKQVETAEQRKAREAEAAKLKAVEETARRKAAEEAQQRTLEQMRKMASKYSTEETGATIRVIDDSPLAAGLVGQAYEDSFNQEDREIKRGGATNPRGQKKGGRNNQEEQSFKSHHKRGLKTSQANKHGFEKPVKKQVYDVEIGSTIVVADLAQKMAIKVREVIKTLMKMGELVTQNQSIDQDTAALVVEEMGHNPILVSDTQAEDNLLEAAEEARGEQTTRPPVVTIMGHVDHGKTSLLDRIRRSKVAAGEAGGITQHIGAYHVETDKGIITFLDTPGHAAFTAMRSRGAKATDIVVLVVAADDGVMPQTAEAIDHARAAGTPIIVAINKMDKESADPDRVLNELTTKQIVPEQWGGDVPVAMVSAHSGQGIDELLDLILIQSELMELKASGEGAAQGVVIEARVDKGRGAVTSILVQNGTLNIGDLVLAGSSYGRVRAMSDENGQPIKSAGPSIPVEILGLPDAPMAGDEVLVVNDEKKAREVADARADRERQKRIERQSAMRLENIMASMGKKDVPTVNVVLKADVRGTLEALTAALNELSMDEVRVRVISSGVGAITESDVTLAESSEAVLLGFNVRADTTARQKSDQDGIDIRYYSIIYELIDDVKNAMSGKLAPEHRETILGVAEVREVFHSSKFGAAAGCMVLEGMLHRNKPIRVLRDDVVVFQGELESLRRYKEVVEEVRAGMECGLAVKGYKDIKAKDKIEVYDVQLIKRSL</sequence>
<comment type="function">
    <text evidence="2">One of the essential components for the initiation of protein synthesis. Protects formylmethionyl-tRNA from spontaneous hydrolysis and promotes its binding to the 30S ribosomal subunits. Also involved in the hydrolysis of GTP during the formation of the 70S ribosomal complex.</text>
</comment>
<comment type="subcellular location">
    <subcellularLocation>
        <location evidence="2">Cytoplasm</location>
    </subcellularLocation>
</comment>
<comment type="similarity">
    <text evidence="2">Belongs to the TRAFAC class translation factor GTPase superfamily. Classic translation factor GTPase family. IF-2 subfamily.</text>
</comment>
<organism>
    <name type="scientific">Acinetobacter baylyi (strain ATCC 33305 / BD413 / ADP1)</name>
    <dbReference type="NCBI Taxonomy" id="62977"/>
    <lineage>
        <taxon>Bacteria</taxon>
        <taxon>Pseudomonadati</taxon>
        <taxon>Pseudomonadota</taxon>
        <taxon>Gammaproteobacteria</taxon>
        <taxon>Moraxellales</taxon>
        <taxon>Moraxellaceae</taxon>
        <taxon>Acinetobacter</taxon>
    </lineage>
</organism>
<accession>Q6FF40</accession>
<evidence type="ECO:0000250" key="1"/>
<evidence type="ECO:0000255" key="2">
    <source>
        <dbReference type="HAMAP-Rule" id="MF_00100"/>
    </source>
</evidence>
<evidence type="ECO:0000256" key="3">
    <source>
        <dbReference type="SAM" id="MobiDB-lite"/>
    </source>
</evidence>
<keyword id="KW-0963">Cytoplasm</keyword>
<keyword id="KW-0342">GTP-binding</keyword>
<keyword id="KW-0396">Initiation factor</keyword>
<keyword id="KW-0547">Nucleotide-binding</keyword>
<keyword id="KW-0648">Protein biosynthesis</keyword>
<name>IF2_ACIAD</name>
<dbReference type="EMBL" id="CR543861">
    <property type="protein sequence ID" value="CAG67317.1"/>
    <property type="molecule type" value="Genomic_DNA"/>
</dbReference>
<dbReference type="RefSeq" id="WP_004920460.1">
    <property type="nucleotide sequence ID" value="NC_005966.1"/>
</dbReference>
<dbReference type="SMR" id="Q6FF40"/>
<dbReference type="STRING" id="202950.GCA_001485005_00632"/>
<dbReference type="GeneID" id="45232873"/>
<dbReference type="KEGG" id="aci:ACIAD0369"/>
<dbReference type="eggNOG" id="COG0532">
    <property type="taxonomic scope" value="Bacteria"/>
</dbReference>
<dbReference type="HOGENOM" id="CLU_006301_6_2_6"/>
<dbReference type="OrthoDB" id="9811804at2"/>
<dbReference type="BioCyc" id="ASP62977:ACIAD_RS01725-MONOMER"/>
<dbReference type="Proteomes" id="UP000000430">
    <property type="component" value="Chromosome"/>
</dbReference>
<dbReference type="GO" id="GO:0005829">
    <property type="term" value="C:cytosol"/>
    <property type="evidence" value="ECO:0007669"/>
    <property type="project" value="TreeGrafter"/>
</dbReference>
<dbReference type="GO" id="GO:0005525">
    <property type="term" value="F:GTP binding"/>
    <property type="evidence" value="ECO:0007669"/>
    <property type="project" value="UniProtKB-KW"/>
</dbReference>
<dbReference type="GO" id="GO:0003924">
    <property type="term" value="F:GTPase activity"/>
    <property type="evidence" value="ECO:0007669"/>
    <property type="project" value="UniProtKB-UniRule"/>
</dbReference>
<dbReference type="GO" id="GO:0003743">
    <property type="term" value="F:translation initiation factor activity"/>
    <property type="evidence" value="ECO:0007669"/>
    <property type="project" value="UniProtKB-UniRule"/>
</dbReference>
<dbReference type="CDD" id="cd01887">
    <property type="entry name" value="IF2_eIF5B"/>
    <property type="match status" value="1"/>
</dbReference>
<dbReference type="CDD" id="cd03702">
    <property type="entry name" value="IF2_mtIF2_II"/>
    <property type="match status" value="1"/>
</dbReference>
<dbReference type="CDD" id="cd03692">
    <property type="entry name" value="mtIF2_IVc"/>
    <property type="match status" value="1"/>
</dbReference>
<dbReference type="FunFam" id="2.40.30.10:FF:000007">
    <property type="entry name" value="Translation initiation factor IF-2"/>
    <property type="match status" value="1"/>
</dbReference>
<dbReference type="FunFam" id="2.40.30.10:FF:000008">
    <property type="entry name" value="Translation initiation factor IF-2"/>
    <property type="match status" value="1"/>
</dbReference>
<dbReference type="FunFam" id="3.40.50.10050:FF:000001">
    <property type="entry name" value="Translation initiation factor IF-2"/>
    <property type="match status" value="1"/>
</dbReference>
<dbReference type="FunFam" id="3.40.50.300:FF:000019">
    <property type="entry name" value="Translation initiation factor IF-2"/>
    <property type="match status" value="1"/>
</dbReference>
<dbReference type="Gene3D" id="3.40.50.300">
    <property type="entry name" value="P-loop containing nucleotide triphosphate hydrolases"/>
    <property type="match status" value="1"/>
</dbReference>
<dbReference type="Gene3D" id="3.30.56.50">
    <property type="entry name" value="Putative DNA-binding domain, N-terminal subdomain of bacterial translation initiation factor IF2"/>
    <property type="match status" value="1"/>
</dbReference>
<dbReference type="Gene3D" id="2.40.30.10">
    <property type="entry name" value="Translation factors"/>
    <property type="match status" value="2"/>
</dbReference>
<dbReference type="Gene3D" id="3.40.50.10050">
    <property type="entry name" value="Translation initiation factor IF- 2, domain 3"/>
    <property type="match status" value="1"/>
</dbReference>
<dbReference type="HAMAP" id="MF_00100_B">
    <property type="entry name" value="IF_2_B"/>
    <property type="match status" value="1"/>
</dbReference>
<dbReference type="InterPro" id="IPR009061">
    <property type="entry name" value="DNA-bd_dom_put_sf"/>
</dbReference>
<dbReference type="InterPro" id="IPR053905">
    <property type="entry name" value="EF-G-like_DII"/>
</dbReference>
<dbReference type="InterPro" id="IPR013575">
    <property type="entry name" value="IF2_assoc_dom_bac"/>
</dbReference>
<dbReference type="InterPro" id="IPR044145">
    <property type="entry name" value="IF2_II"/>
</dbReference>
<dbReference type="InterPro" id="IPR006847">
    <property type="entry name" value="IF2_N"/>
</dbReference>
<dbReference type="InterPro" id="IPR027417">
    <property type="entry name" value="P-loop_NTPase"/>
</dbReference>
<dbReference type="InterPro" id="IPR005225">
    <property type="entry name" value="Small_GTP-bd"/>
</dbReference>
<dbReference type="InterPro" id="IPR000795">
    <property type="entry name" value="T_Tr_GTP-bd_dom"/>
</dbReference>
<dbReference type="InterPro" id="IPR000178">
    <property type="entry name" value="TF_IF2_bacterial-like"/>
</dbReference>
<dbReference type="InterPro" id="IPR015760">
    <property type="entry name" value="TIF_IF2"/>
</dbReference>
<dbReference type="InterPro" id="IPR023115">
    <property type="entry name" value="TIF_IF2_dom3"/>
</dbReference>
<dbReference type="InterPro" id="IPR036925">
    <property type="entry name" value="TIF_IF2_dom3_sf"/>
</dbReference>
<dbReference type="InterPro" id="IPR009000">
    <property type="entry name" value="Transl_B-barrel_sf"/>
</dbReference>
<dbReference type="NCBIfam" id="TIGR00487">
    <property type="entry name" value="IF-2"/>
    <property type="match status" value="1"/>
</dbReference>
<dbReference type="NCBIfam" id="TIGR00231">
    <property type="entry name" value="small_GTP"/>
    <property type="match status" value="1"/>
</dbReference>
<dbReference type="PANTHER" id="PTHR43381:SF5">
    <property type="entry name" value="TR-TYPE G DOMAIN-CONTAINING PROTEIN"/>
    <property type="match status" value="1"/>
</dbReference>
<dbReference type="PANTHER" id="PTHR43381">
    <property type="entry name" value="TRANSLATION INITIATION FACTOR IF-2-RELATED"/>
    <property type="match status" value="1"/>
</dbReference>
<dbReference type="Pfam" id="PF22042">
    <property type="entry name" value="EF-G_D2"/>
    <property type="match status" value="1"/>
</dbReference>
<dbReference type="Pfam" id="PF00009">
    <property type="entry name" value="GTP_EFTU"/>
    <property type="match status" value="1"/>
</dbReference>
<dbReference type="Pfam" id="PF11987">
    <property type="entry name" value="IF-2"/>
    <property type="match status" value="1"/>
</dbReference>
<dbReference type="Pfam" id="PF08364">
    <property type="entry name" value="IF2_assoc"/>
    <property type="match status" value="1"/>
</dbReference>
<dbReference type="Pfam" id="PF04760">
    <property type="entry name" value="IF2_N"/>
    <property type="match status" value="1"/>
</dbReference>
<dbReference type="SUPFAM" id="SSF52156">
    <property type="entry name" value="Initiation factor IF2/eIF5b, domain 3"/>
    <property type="match status" value="1"/>
</dbReference>
<dbReference type="SUPFAM" id="SSF52540">
    <property type="entry name" value="P-loop containing nucleoside triphosphate hydrolases"/>
    <property type="match status" value="1"/>
</dbReference>
<dbReference type="SUPFAM" id="SSF46955">
    <property type="entry name" value="Putative DNA-binding domain"/>
    <property type="match status" value="1"/>
</dbReference>
<dbReference type="SUPFAM" id="SSF50447">
    <property type="entry name" value="Translation proteins"/>
    <property type="match status" value="2"/>
</dbReference>
<dbReference type="PROSITE" id="PS51722">
    <property type="entry name" value="G_TR_2"/>
    <property type="match status" value="1"/>
</dbReference>
<dbReference type="PROSITE" id="PS01176">
    <property type="entry name" value="IF2"/>
    <property type="match status" value="1"/>
</dbReference>
<reference key="1">
    <citation type="journal article" date="2004" name="Nucleic Acids Res.">
        <title>Unique features revealed by the genome sequence of Acinetobacter sp. ADP1, a versatile and naturally transformation competent bacterium.</title>
        <authorList>
            <person name="Barbe V."/>
            <person name="Vallenet D."/>
            <person name="Fonknechten N."/>
            <person name="Kreimeyer A."/>
            <person name="Oztas S."/>
            <person name="Labarre L."/>
            <person name="Cruveiller S."/>
            <person name="Robert C."/>
            <person name="Duprat S."/>
            <person name="Wincker P."/>
            <person name="Ornston L.N."/>
            <person name="Weissenbach J."/>
            <person name="Marliere P."/>
            <person name="Cohen G.N."/>
            <person name="Medigue C."/>
        </authorList>
    </citation>
    <scope>NUCLEOTIDE SEQUENCE [LARGE SCALE GENOMIC DNA]</scope>
    <source>
        <strain>ATCC 33305 / BD413 / ADP1</strain>
    </source>
</reference>